<proteinExistence type="predicted"/>
<name>Y23K_BPP22</name>
<accession>P21417</accession>
<accession>Q7PCD3</accession>
<feature type="chain" id="PRO_0000077783" description="Uncharacterized 22.8 kDa protein in gp15-gp3 intergenic region">
    <location>
        <begin position="1"/>
        <end position="201"/>
    </location>
</feature>
<organism>
    <name type="scientific">Salmonella phage P22</name>
    <name type="common">Bacteriophage P22</name>
    <dbReference type="NCBI Taxonomy" id="10754"/>
    <lineage>
        <taxon>Viruses</taxon>
        <taxon>Duplodnaviria</taxon>
        <taxon>Heunggongvirae</taxon>
        <taxon>Uroviricota</taxon>
        <taxon>Caudoviricetes</taxon>
        <taxon>Lederbergvirus</taxon>
    </lineage>
</organism>
<sequence>MLASLGGLVSCAAKVHFKEEGNAMNELIANHDFDFRQLVTAAEGQPVTDTFQIAKAFGKRHADVLRALKNCHCSEDFRRAHFCVSEKINNLGIFDKKQIYYRMDFSGFVMLVMGFNGAKADAVKEAYINAFNWMSAELRKYSESYEAERNAIMLEYMKEKDVASMSGRLLNRWGKIKKPQLLARIGRLEQHGQTVIPGLTN</sequence>
<reference key="1">
    <citation type="journal article" date="1989" name="Virology">
        <title>Nucleotide sequence of the bacteriophage P22 gene 19 to 3 region: identification of a new gene required for lysis.</title>
        <authorList>
            <person name="Casjens S."/>
            <person name="Eppler K."/>
            <person name="Parr R."/>
            <person name="Poteete A.R."/>
        </authorList>
    </citation>
    <scope>NUCLEOTIDE SEQUENCE [GENOMIC DNA]</scope>
</reference>
<reference key="2">
    <citation type="journal article" date="2000" name="J. Bacteriol.">
        <title>Sequence of the genome of Salmonella bacteriophage P22.</title>
        <authorList>
            <person name="Vander Byl C.S."/>
            <person name="Kropinski A.M.B."/>
        </authorList>
    </citation>
    <scope>NUCLEOTIDE SEQUENCE [LARGE SCALE GENOMIC DNA]</scope>
</reference>
<reference key="3">
    <citation type="journal article" date="2003" name="J. Bacteriol.">
        <title>Corrected sequence of the bacteriophage P22 genome.</title>
        <authorList>
            <person name="Pedulla M.L."/>
            <person name="Ford M.E."/>
            <person name="Karthikeyan T."/>
            <person name="Houtz J.M."/>
            <person name="Hendrix R.W."/>
            <person name="Hatfull G.F."/>
            <person name="Poteete A.R."/>
            <person name="Gilcrease E.B."/>
            <person name="Winn-Stapley D.A."/>
            <person name="Casjens S.R."/>
        </authorList>
    </citation>
    <scope>NUCLEOTIDE SEQUENCE [LARGE SCALE GENOMIC DNA]</scope>
</reference>
<comment type="similarity">
    <text evidence="1">To H.influenzae HI_1412.</text>
</comment>
<dbReference type="EMBL" id="J04356">
    <property type="protein sequence ID" value="AAA88342.1"/>
    <property type="molecule type" value="Genomic_DNA"/>
</dbReference>
<dbReference type="EMBL" id="AF217253">
    <property type="protein sequence ID" value="AAF75042.1"/>
    <property type="molecule type" value="Genomic_DNA"/>
</dbReference>
<dbReference type="EMBL" id="BK000583">
    <property type="protein sequence ID" value="DAA01042.1"/>
    <property type="molecule type" value="Genomic_DNA"/>
</dbReference>
<dbReference type="PIR" id="B33080">
    <property type="entry name" value="QQBP22"/>
</dbReference>
<dbReference type="RefSeq" id="NP_059624.1">
    <property type="nucleotide sequence ID" value="NC_002371.2"/>
</dbReference>
<dbReference type="DNASU" id="1262836"/>
<dbReference type="GeneID" id="1262836"/>
<dbReference type="KEGG" id="vg:1262836"/>
<dbReference type="OrthoDB" id="14838at10239"/>
<dbReference type="Proteomes" id="UP000001795">
    <property type="component" value="Segment"/>
</dbReference>
<dbReference type="Proteomes" id="UP000007960">
    <property type="component" value="Segment"/>
</dbReference>
<dbReference type="InterPro" id="IPR018877">
    <property type="entry name" value="Phage_P22_Orf201_C"/>
</dbReference>
<dbReference type="InterPro" id="IPR014054">
    <property type="entry name" value="Phage_regulatory_Rha"/>
</dbReference>
<dbReference type="NCBIfam" id="TIGR02681">
    <property type="entry name" value="phage_pRha"/>
    <property type="match status" value="1"/>
</dbReference>
<dbReference type="Pfam" id="PF10549">
    <property type="entry name" value="ORF11CD3"/>
    <property type="match status" value="1"/>
</dbReference>
<dbReference type="Pfam" id="PF09669">
    <property type="entry name" value="Phage_pRha"/>
    <property type="match status" value="1"/>
</dbReference>
<organismHost>
    <name type="scientific">Salmonella typhimurium</name>
    <dbReference type="NCBI Taxonomy" id="90371"/>
</organismHost>
<evidence type="ECO:0000305" key="1"/>
<protein>
    <recommendedName>
        <fullName>Uncharacterized 22.8 kDa protein in gp15-gp3 intergenic region</fullName>
    </recommendedName>
    <alternativeName>
        <fullName>ORF201</fullName>
    </alternativeName>
</protein>
<keyword id="KW-1185">Reference proteome</keyword>